<comment type="function">
    <text evidence="1">RNA-binding protein that binds to AU-rich sequences (AREs) of target mRNAs. May also bind poly-A tracts via RRM 3. May be involved in neuronal differentiation and maintenance (By similarity).</text>
</comment>
<comment type="alternative products">
    <event type="alternative splicing"/>
    <isoform>
        <id>Q28FX0-1</id>
        <name>1</name>
        <sequence type="displayed"/>
    </isoform>
    <isoform>
        <id>Q28FX0-2</id>
        <name>2</name>
        <sequence type="described" ref="VSP_038720"/>
    </isoform>
</comment>
<comment type="domain">
    <text evidence="1">RRM 1 and RRM 2 bind cooperatively to AU-rich sequences in target mRNAs. RRM 3 binds to poly-A mRNA sequences (By similarity).</text>
</comment>
<comment type="similarity">
    <text evidence="3">Belongs to the RRM elav family.</text>
</comment>
<feature type="chain" id="PRO_0000391374" description="ELAV-like protein 3">
    <location>
        <begin position="1"/>
        <end position="343"/>
    </location>
</feature>
<feature type="domain" description="RRM 1" evidence="4">
    <location>
        <begin position="35"/>
        <end position="113"/>
    </location>
</feature>
<feature type="domain" description="RRM 2" evidence="4">
    <location>
        <begin position="121"/>
        <end position="202"/>
    </location>
</feature>
<feature type="domain" description="RRM 3" evidence="4">
    <location>
        <begin position="260"/>
        <end position="338"/>
    </location>
</feature>
<feature type="splice variant" id="VSP_038720" description="In isoform 2." evidence="5">
    <location>
        <position position="160"/>
    </location>
</feature>
<keyword id="KW-0025">Alternative splicing</keyword>
<keyword id="KW-0217">Developmental protein</keyword>
<keyword id="KW-0221">Differentiation</keyword>
<keyword id="KW-0524">Neurogenesis</keyword>
<keyword id="KW-1185">Reference proteome</keyword>
<keyword id="KW-0677">Repeat</keyword>
<keyword id="KW-0687">Ribonucleoprotein</keyword>
<keyword id="KW-0694">RNA-binding</keyword>
<reference evidence="6 8" key="1">
    <citation type="submission" date="2006-10" db="EMBL/GenBank/DDBJ databases">
        <authorList>
            <consortium name="Sanger Xenopus tropicalis EST/cDNA project"/>
        </authorList>
    </citation>
    <scope>NUCLEOTIDE SEQUENCE [LARGE SCALE MRNA] (ISOFORM 1)</scope>
    <source>
        <tissue evidence="8">Gastrula</tissue>
    </source>
</reference>
<reference evidence="6 8" key="2">
    <citation type="submission" date="2007-03" db="EMBL/GenBank/DDBJ databases">
        <authorList>
            <consortium name="NIH - Xenopus Gene Collection (XGC) project"/>
        </authorList>
    </citation>
    <scope>NUCLEOTIDE SEQUENCE [LARGE SCALE MRNA] (ISOFORM 2)</scope>
    <source>
        <tissue evidence="7">Brain</tissue>
    </source>
</reference>
<accession>Q28FX0</accession>
<accession>A4IIS4</accession>
<proteinExistence type="evidence at transcript level"/>
<dbReference type="EMBL" id="CR761704">
    <property type="protein sequence ID" value="CAJ83874.1"/>
    <property type="molecule type" value="mRNA"/>
</dbReference>
<dbReference type="EMBL" id="BC136134">
    <property type="protein sequence ID" value="AAI36135.1"/>
    <property type="molecule type" value="mRNA"/>
</dbReference>
<dbReference type="RefSeq" id="NP_001025497.1">
    <molecule id="Q28FX0-1"/>
    <property type="nucleotide sequence ID" value="NM_001030326.2"/>
</dbReference>
<dbReference type="RefSeq" id="XP_012808621.1">
    <molecule id="Q28FX0-2"/>
    <property type="nucleotide sequence ID" value="XM_012953167.3"/>
</dbReference>
<dbReference type="SMR" id="Q28FX0"/>
<dbReference type="FunCoup" id="Q28FX0">
    <property type="interactions" value="303"/>
</dbReference>
<dbReference type="STRING" id="8364.ENSXETP00000040201"/>
<dbReference type="PaxDb" id="8364-ENSXETP00000019000"/>
<dbReference type="DNASU" id="594912"/>
<dbReference type="GeneID" id="594912"/>
<dbReference type="KEGG" id="xtr:594912"/>
<dbReference type="AGR" id="Xenbase:XB-GENE-490864"/>
<dbReference type="CTD" id="1995"/>
<dbReference type="Xenbase" id="XB-GENE-490864">
    <property type="gene designation" value="elavl3"/>
</dbReference>
<dbReference type="eggNOG" id="KOG0145">
    <property type="taxonomic scope" value="Eukaryota"/>
</dbReference>
<dbReference type="InParanoid" id="Q28FX0"/>
<dbReference type="OrthoDB" id="266020at2759"/>
<dbReference type="Proteomes" id="UP000008143">
    <property type="component" value="Chromosome 3"/>
</dbReference>
<dbReference type="ExpressionAtlas" id="Q28FX0">
    <property type="expression patterns" value="baseline and differential"/>
</dbReference>
<dbReference type="GO" id="GO:1990904">
    <property type="term" value="C:ribonucleoprotein complex"/>
    <property type="evidence" value="ECO:0007669"/>
    <property type="project" value="UniProtKB-KW"/>
</dbReference>
<dbReference type="GO" id="GO:0003723">
    <property type="term" value="F:RNA binding"/>
    <property type="evidence" value="ECO:0007669"/>
    <property type="project" value="UniProtKB-KW"/>
</dbReference>
<dbReference type="GO" id="GO:0030154">
    <property type="term" value="P:cell differentiation"/>
    <property type="evidence" value="ECO:0007669"/>
    <property type="project" value="UniProtKB-KW"/>
</dbReference>
<dbReference type="GO" id="GO:0007399">
    <property type="term" value="P:nervous system development"/>
    <property type="evidence" value="ECO:0007669"/>
    <property type="project" value="UniProtKB-KW"/>
</dbReference>
<dbReference type="CDD" id="cd12772">
    <property type="entry name" value="RRM1_HuC"/>
    <property type="match status" value="1"/>
</dbReference>
<dbReference type="CDD" id="cd12776">
    <property type="entry name" value="RRM2_HuC"/>
    <property type="match status" value="1"/>
</dbReference>
<dbReference type="FunFam" id="3.30.70.330:FF:000006">
    <property type="entry name" value="ELAV-like 3"/>
    <property type="match status" value="1"/>
</dbReference>
<dbReference type="FunFam" id="3.30.70.330:FF:000005">
    <property type="entry name" value="ELAV-like protein"/>
    <property type="match status" value="1"/>
</dbReference>
<dbReference type="FunFam" id="3.30.70.330:FF:000017">
    <property type="entry name" value="ELAV-like protein"/>
    <property type="match status" value="1"/>
</dbReference>
<dbReference type="Gene3D" id="3.30.70.330">
    <property type="match status" value="3"/>
</dbReference>
<dbReference type="InterPro" id="IPR006548">
    <property type="entry name" value="ELAD_HU_SF"/>
</dbReference>
<dbReference type="InterPro" id="IPR002343">
    <property type="entry name" value="Hud_Sxl_RNA"/>
</dbReference>
<dbReference type="InterPro" id="IPR012677">
    <property type="entry name" value="Nucleotide-bd_a/b_plait_sf"/>
</dbReference>
<dbReference type="InterPro" id="IPR035979">
    <property type="entry name" value="RBD_domain_sf"/>
</dbReference>
<dbReference type="InterPro" id="IPR000504">
    <property type="entry name" value="RRM_dom"/>
</dbReference>
<dbReference type="InterPro" id="IPR003954">
    <property type="entry name" value="RRM_dom_euk"/>
</dbReference>
<dbReference type="NCBIfam" id="TIGR01661">
    <property type="entry name" value="ELAV_HUD_SF"/>
    <property type="match status" value="1"/>
</dbReference>
<dbReference type="PANTHER" id="PTHR10352">
    <property type="entry name" value="EUKARYOTIC TRANSLATION INITIATION FACTOR 3 SUBUNIT G"/>
    <property type="match status" value="1"/>
</dbReference>
<dbReference type="Pfam" id="PF00076">
    <property type="entry name" value="RRM_1"/>
    <property type="match status" value="3"/>
</dbReference>
<dbReference type="PRINTS" id="PR00961">
    <property type="entry name" value="HUDSXLRNA"/>
</dbReference>
<dbReference type="SMART" id="SM00360">
    <property type="entry name" value="RRM"/>
    <property type="match status" value="3"/>
</dbReference>
<dbReference type="SMART" id="SM00361">
    <property type="entry name" value="RRM_1"/>
    <property type="match status" value="2"/>
</dbReference>
<dbReference type="SUPFAM" id="SSF54928">
    <property type="entry name" value="RNA-binding domain, RBD"/>
    <property type="match status" value="2"/>
</dbReference>
<dbReference type="PROSITE" id="PS50102">
    <property type="entry name" value="RRM"/>
    <property type="match status" value="3"/>
</dbReference>
<gene>
    <name evidence="8" type="primary">elavl3</name>
    <name evidence="2" type="synonym">elrC</name>
    <name type="ORF">TGas116i13.1</name>
</gene>
<evidence type="ECO:0000250" key="1">
    <source>
        <dbReference type="UniProtKB" id="Q60900"/>
    </source>
</evidence>
<evidence type="ECO:0000250" key="2">
    <source>
        <dbReference type="UniProtKB" id="Q91584"/>
    </source>
</evidence>
<evidence type="ECO:0000255" key="3"/>
<evidence type="ECO:0000255" key="4">
    <source>
        <dbReference type="PROSITE-ProRule" id="PRU00176"/>
    </source>
</evidence>
<evidence type="ECO:0000303" key="5">
    <source ref="2"/>
</evidence>
<evidence type="ECO:0000305" key="6"/>
<evidence type="ECO:0000312" key="7">
    <source>
        <dbReference type="EMBL" id="AAI36135.1"/>
    </source>
</evidence>
<evidence type="ECO:0000312" key="8">
    <source>
        <dbReference type="EMBL" id="CAJ83874.1"/>
    </source>
</evidence>
<name>ELAV3_XENTR</name>
<sequence>MVTQIISTMETQASNGPGSVGILNGTNGAADDSKTNLIVNYLPQNMTQEEFKSLFGSIGEIESCKLVRDKITGQSLGYGFVNYVDPNDADKAINTLNGLKLQTKTIKVSYARPSSASIRDANLYVSSLPKTMNQKEMEQLFSQYGRIITSRILVDQVTGSVSRGVGFIRFDKRIEAEEAIKGLNGQKPLGASEPITVKFANNPSQKTGQALLTHLYQTTARRYTGPLHHQTQRFRFSPITIDSVTNLAGVSLTGPTTAGWCIFVYNLSPEADESVLWQLFGPFGAVTNVKVIRDFTTNKCKGFGFVTMTNYDEAAMAIASLNGYRLGDRVLQVSFKTSKQHKA</sequence>
<protein>
    <recommendedName>
        <fullName evidence="1">ELAV-like protein 3</fullName>
    </recommendedName>
    <alternativeName>
        <fullName evidence="2">Protein ElrC</fullName>
    </alternativeName>
</protein>
<organism>
    <name type="scientific">Xenopus tropicalis</name>
    <name type="common">Western clawed frog</name>
    <name type="synonym">Silurana tropicalis</name>
    <dbReference type="NCBI Taxonomy" id="8364"/>
    <lineage>
        <taxon>Eukaryota</taxon>
        <taxon>Metazoa</taxon>
        <taxon>Chordata</taxon>
        <taxon>Craniata</taxon>
        <taxon>Vertebrata</taxon>
        <taxon>Euteleostomi</taxon>
        <taxon>Amphibia</taxon>
        <taxon>Batrachia</taxon>
        <taxon>Anura</taxon>
        <taxon>Pipoidea</taxon>
        <taxon>Pipidae</taxon>
        <taxon>Xenopodinae</taxon>
        <taxon>Xenopus</taxon>
        <taxon>Silurana</taxon>
    </lineage>
</organism>